<gene>
    <name type="primary">yfmS</name>
    <name type="ordered locus">BSU07360</name>
</gene>
<name>YFMS_BACSU</name>
<evidence type="ECO:0000250" key="1"/>
<evidence type="ECO:0000255" key="2">
    <source>
        <dbReference type="PROSITE-ProRule" id="PRU00284"/>
    </source>
</evidence>
<evidence type="ECO:0000269" key="3">
    <source>
    </source>
</evidence>
<evidence type="ECO:0000305" key="4"/>
<keyword id="KW-1185">Reference proteome</keyword>
<keyword id="KW-0807">Transducer</keyword>
<accession>O06477</accession>
<accession>Q797A5</accession>
<sequence>MELTINTEKETADILDAFIKVAPYLNSLVQDDITIGIYDTEKLLVNIPAKTFSLNVKAGDPLQEGDIITDAIRSNQKKTSMVPKELFGFPLIARAIPLHDENGRVIGGVGLGTSLEESSKLHDVAESLSAVVEQTAAAISDISESINGFSTQMSGISSQAKKVSESAGEIADISVTVKGISDQSNLLGLNAAIEAARAGESGKGFSVVADEIRKLATHSKENVGQIDQITKKIHSLLKGLEESIESINQHTDGQAAAVEQISATMQEISGSAQHLAKMAEKALEEE</sequence>
<organism>
    <name type="scientific">Bacillus subtilis (strain 168)</name>
    <dbReference type="NCBI Taxonomy" id="224308"/>
    <lineage>
        <taxon>Bacteria</taxon>
        <taxon>Bacillati</taxon>
        <taxon>Bacillota</taxon>
        <taxon>Bacilli</taxon>
        <taxon>Bacillales</taxon>
        <taxon>Bacillaceae</taxon>
        <taxon>Bacillus</taxon>
    </lineage>
</organism>
<reference key="1">
    <citation type="journal article" date="1997" name="Microbiology">
        <title>A 23.4 kb segment at the 69 degrees-70 degrees region of the Bacillus subtilis genome.</title>
        <authorList>
            <person name="Yamamoto H."/>
            <person name="Uchiyama S."/>
            <person name="Nugroho F.A."/>
            <person name="Sekiguchi J."/>
        </authorList>
    </citation>
    <scope>NUCLEOTIDE SEQUENCE [GENOMIC DNA]</scope>
    <source>
        <strain>168 / AC327</strain>
    </source>
</reference>
<reference key="2">
    <citation type="journal article" date="1997" name="Nature">
        <title>The complete genome sequence of the Gram-positive bacterium Bacillus subtilis.</title>
        <authorList>
            <person name="Kunst F."/>
            <person name="Ogasawara N."/>
            <person name="Moszer I."/>
            <person name="Albertini A.M."/>
            <person name="Alloni G."/>
            <person name="Azevedo V."/>
            <person name="Bertero M.G."/>
            <person name="Bessieres P."/>
            <person name="Bolotin A."/>
            <person name="Borchert S."/>
            <person name="Borriss R."/>
            <person name="Boursier L."/>
            <person name="Brans A."/>
            <person name="Braun M."/>
            <person name="Brignell S.C."/>
            <person name="Bron S."/>
            <person name="Brouillet S."/>
            <person name="Bruschi C.V."/>
            <person name="Caldwell B."/>
            <person name="Capuano V."/>
            <person name="Carter N.M."/>
            <person name="Choi S.-K."/>
            <person name="Codani J.-J."/>
            <person name="Connerton I.F."/>
            <person name="Cummings N.J."/>
            <person name="Daniel R.A."/>
            <person name="Denizot F."/>
            <person name="Devine K.M."/>
            <person name="Duesterhoeft A."/>
            <person name="Ehrlich S.D."/>
            <person name="Emmerson P.T."/>
            <person name="Entian K.-D."/>
            <person name="Errington J."/>
            <person name="Fabret C."/>
            <person name="Ferrari E."/>
            <person name="Foulger D."/>
            <person name="Fritz C."/>
            <person name="Fujita M."/>
            <person name="Fujita Y."/>
            <person name="Fuma S."/>
            <person name="Galizzi A."/>
            <person name="Galleron N."/>
            <person name="Ghim S.-Y."/>
            <person name="Glaser P."/>
            <person name="Goffeau A."/>
            <person name="Golightly E.J."/>
            <person name="Grandi G."/>
            <person name="Guiseppi G."/>
            <person name="Guy B.J."/>
            <person name="Haga K."/>
            <person name="Haiech J."/>
            <person name="Harwood C.R."/>
            <person name="Henaut A."/>
            <person name="Hilbert H."/>
            <person name="Holsappel S."/>
            <person name="Hosono S."/>
            <person name="Hullo M.-F."/>
            <person name="Itaya M."/>
            <person name="Jones L.-M."/>
            <person name="Joris B."/>
            <person name="Karamata D."/>
            <person name="Kasahara Y."/>
            <person name="Klaerr-Blanchard M."/>
            <person name="Klein C."/>
            <person name="Kobayashi Y."/>
            <person name="Koetter P."/>
            <person name="Koningstein G."/>
            <person name="Krogh S."/>
            <person name="Kumano M."/>
            <person name="Kurita K."/>
            <person name="Lapidus A."/>
            <person name="Lardinois S."/>
            <person name="Lauber J."/>
            <person name="Lazarevic V."/>
            <person name="Lee S.-M."/>
            <person name="Levine A."/>
            <person name="Liu H."/>
            <person name="Masuda S."/>
            <person name="Mauel C."/>
            <person name="Medigue C."/>
            <person name="Medina N."/>
            <person name="Mellado R.P."/>
            <person name="Mizuno M."/>
            <person name="Moestl D."/>
            <person name="Nakai S."/>
            <person name="Noback M."/>
            <person name="Noone D."/>
            <person name="O'Reilly M."/>
            <person name="Ogawa K."/>
            <person name="Ogiwara A."/>
            <person name="Oudega B."/>
            <person name="Park S.-H."/>
            <person name="Parro V."/>
            <person name="Pohl T.M."/>
            <person name="Portetelle D."/>
            <person name="Porwollik S."/>
            <person name="Prescott A.M."/>
            <person name="Presecan E."/>
            <person name="Pujic P."/>
            <person name="Purnelle B."/>
            <person name="Rapoport G."/>
            <person name="Rey M."/>
            <person name="Reynolds S."/>
            <person name="Rieger M."/>
            <person name="Rivolta C."/>
            <person name="Rocha E."/>
            <person name="Roche B."/>
            <person name="Rose M."/>
            <person name="Sadaie Y."/>
            <person name="Sato T."/>
            <person name="Scanlan E."/>
            <person name="Schleich S."/>
            <person name="Schroeter R."/>
            <person name="Scoffone F."/>
            <person name="Sekiguchi J."/>
            <person name="Sekowska A."/>
            <person name="Seror S.J."/>
            <person name="Serror P."/>
            <person name="Shin B.-S."/>
            <person name="Soldo B."/>
            <person name="Sorokin A."/>
            <person name="Tacconi E."/>
            <person name="Takagi T."/>
            <person name="Takahashi H."/>
            <person name="Takemaru K."/>
            <person name="Takeuchi M."/>
            <person name="Tamakoshi A."/>
            <person name="Tanaka T."/>
            <person name="Terpstra P."/>
            <person name="Tognoni A."/>
            <person name="Tosato V."/>
            <person name="Uchiyama S."/>
            <person name="Vandenbol M."/>
            <person name="Vannier F."/>
            <person name="Vassarotti A."/>
            <person name="Viari A."/>
            <person name="Wambutt R."/>
            <person name="Wedler E."/>
            <person name="Wedler H."/>
            <person name="Weitzenegger T."/>
            <person name="Winters P."/>
            <person name="Wipat A."/>
            <person name="Yamamoto H."/>
            <person name="Yamane K."/>
            <person name="Yasumoto K."/>
            <person name="Yata K."/>
            <person name="Yoshida K."/>
            <person name="Yoshikawa H.-F."/>
            <person name="Zumstein E."/>
            <person name="Yoshikawa H."/>
            <person name="Danchin A."/>
        </authorList>
    </citation>
    <scope>NUCLEOTIDE SEQUENCE [LARGE SCALE GENOMIC DNA]</scope>
    <source>
        <strain>168</strain>
    </source>
</reference>
<reference key="3">
    <citation type="journal article" date="2004" name="Gene">
        <title>Systematic analysis of SigD-regulated genes in Bacillus subtilis by DNA microarray and Northern blotting analyses.</title>
        <authorList>
            <person name="Serizawa M."/>
            <person name="Yamamoto H."/>
            <person name="Yamaguchi H."/>
            <person name="Fujita Y."/>
            <person name="Kobayashi K."/>
            <person name="Ogasawara N."/>
            <person name="Sekiguchi J."/>
        </authorList>
    </citation>
    <scope>INDUCTION</scope>
    <scope>OPERON STRUCTURE</scope>
    <source>
        <strain>168</strain>
    </source>
</reference>
<protein>
    <recommendedName>
        <fullName>Putative sensory transducer protein YfmS</fullName>
    </recommendedName>
    <alternativeName>
        <fullName>Methyl-accepting chemotaxis protein</fullName>
    </alternativeName>
</protein>
<feature type="chain" id="PRO_0000388354" description="Putative sensory transducer protein YfmS">
    <location>
        <begin position="1"/>
        <end position="286"/>
    </location>
</feature>
<feature type="domain" description="Methyl-accepting transducer" evidence="2">
    <location>
        <begin position="68"/>
        <end position="286"/>
    </location>
</feature>
<comment type="function">
    <text evidence="1">Chemotactic-signal transducers respond to changes in the concentration of attractants and repellents in the environment, transduce a signal from the outside to the inside of the cell, and facilitate sensory adaptation through the variation of the level of methylation. Attractants increase the level of methylation while repellents decrease the level of methylation (By similarity).</text>
</comment>
<comment type="induction">
    <text evidence="3">Transcriptionally regulated by SigD; part of the yfmT/yfmS operon.</text>
</comment>
<comment type="similarity">
    <text evidence="4">Belongs to the methyl-accepting chemotaxis (MCP) protein family.</text>
</comment>
<proteinExistence type="evidence at transcript level"/>
<dbReference type="EMBL" id="D86418">
    <property type="protein sequence ID" value="BAA20108.1"/>
    <property type="molecule type" value="Genomic_DNA"/>
</dbReference>
<dbReference type="EMBL" id="AL009126">
    <property type="protein sequence ID" value="CAB12555.1"/>
    <property type="molecule type" value="Genomic_DNA"/>
</dbReference>
<dbReference type="PIR" id="B69814">
    <property type="entry name" value="B69814"/>
</dbReference>
<dbReference type="RefSeq" id="NP_388617.1">
    <property type="nucleotide sequence ID" value="NC_000964.3"/>
</dbReference>
<dbReference type="RefSeq" id="WP_003233767.1">
    <property type="nucleotide sequence ID" value="NZ_OZ025638.1"/>
</dbReference>
<dbReference type="SMR" id="O06477"/>
<dbReference type="FunCoup" id="O06477">
    <property type="interactions" value="113"/>
</dbReference>
<dbReference type="STRING" id="224308.BSU07360"/>
<dbReference type="jPOST" id="O06477"/>
<dbReference type="PaxDb" id="224308-BSU07360"/>
<dbReference type="EnsemblBacteria" id="CAB12555">
    <property type="protein sequence ID" value="CAB12555"/>
    <property type="gene ID" value="BSU_07360"/>
</dbReference>
<dbReference type="GeneID" id="936102"/>
<dbReference type="KEGG" id="bsu:BSU07360"/>
<dbReference type="PATRIC" id="fig|224308.179.peg.798"/>
<dbReference type="eggNOG" id="COG0840">
    <property type="taxonomic scope" value="Bacteria"/>
</dbReference>
<dbReference type="InParanoid" id="O06477"/>
<dbReference type="OrthoDB" id="9807021at2"/>
<dbReference type="PhylomeDB" id="O06477"/>
<dbReference type="BioCyc" id="BSUB:BSU07360-MONOMER"/>
<dbReference type="Proteomes" id="UP000001570">
    <property type="component" value="Chromosome"/>
</dbReference>
<dbReference type="GO" id="GO:0016020">
    <property type="term" value="C:membrane"/>
    <property type="evidence" value="ECO:0007669"/>
    <property type="project" value="InterPro"/>
</dbReference>
<dbReference type="GO" id="GO:0007165">
    <property type="term" value="P:signal transduction"/>
    <property type="evidence" value="ECO:0007669"/>
    <property type="project" value="UniProtKB-KW"/>
</dbReference>
<dbReference type="Gene3D" id="1.10.287.950">
    <property type="entry name" value="Methyl-accepting chemotaxis protein"/>
    <property type="match status" value="1"/>
</dbReference>
<dbReference type="InterPro" id="IPR004089">
    <property type="entry name" value="MCPsignal_dom"/>
</dbReference>
<dbReference type="InterPro" id="IPR029151">
    <property type="entry name" value="Sensor-like_sf"/>
</dbReference>
<dbReference type="PANTHER" id="PTHR32089:SF112">
    <property type="entry name" value="LYSOZYME-LIKE PROTEIN-RELATED"/>
    <property type="match status" value="1"/>
</dbReference>
<dbReference type="PANTHER" id="PTHR32089">
    <property type="entry name" value="METHYL-ACCEPTING CHEMOTAXIS PROTEIN MCPB"/>
    <property type="match status" value="1"/>
</dbReference>
<dbReference type="Pfam" id="PF00015">
    <property type="entry name" value="MCPsignal"/>
    <property type="match status" value="1"/>
</dbReference>
<dbReference type="SMART" id="SM00283">
    <property type="entry name" value="MA"/>
    <property type="match status" value="1"/>
</dbReference>
<dbReference type="SUPFAM" id="SSF58104">
    <property type="entry name" value="Methyl-accepting chemotaxis protein (MCP) signaling domain"/>
    <property type="match status" value="1"/>
</dbReference>
<dbReference type="SUPFAM" id="SSF103190">
    <property type="entry name" value="Sensory domain-like"/>
    <property type="match status" value="1"/>
</dbReference>
<dbReference type="PROSITE" id="PS50111">
    <property type="entry name" value="CHEMOTAXIS_TRANSDUC_2"/>
    <property type="match status" value="1"/>
</dbReference>